<accession>P86485</accession>
<keyword id="KW-0878">Amphibian defense peptide</keyword>
<keyword id="KW-0044">Antibiotic</keyword>
<keyword id="KW-0929">Antimicrobial</keyword>
<keyword id="KW-0903">Direct protein sequencing</keyword>
<keyword id="KW-0964">Secreted</keyword>
<dbReference type="GO" id="GO:0005576">
    <property type="term" value="C:extracellular region"/>
    <property type="evidence" value="ECO:0000314"/>
    <property type="project" value="UniProtKB"/>
</dbReference>
<dbReference type="GO" id="GO:0050829">
    <property type="term" value="P:defense response to Gram-negative bacterium"/>
    <property type="evidence" value="ECO:0000314"/>
    <property type="project" value="UniProtKB"/>
</dbReference>
<dbReference type="GO" id="GO:0051001">
    <property type="term" value="P:negative regulation of nitric-oxide synthase activity"/>
    <property type="evidence" value="ECO:0000314"/>
    <property type="project" value="UniProtKB"/>
</dbReference>
<dbReference type="InterPro" id="IPR032021">
    <property type="entry name" value="Frog_Litoria"/>
</dbReference>
<dbReference type="Pfam" id="PF16049">
    <property type="entry name" value="Antimicrobial24"/>
    <property type="match status" value="1"/>
</dbReference>
<evidence type="ECO:0000255" key="1"/>
<evidence type="ECO:0000269" key="2">
    <source>
    </source>
</evidence>
<evidence type="ECO:0000303" key="3">
    <source>
    </source>
</evidence>
<evidence type="ECO:0000305" key="4"/>
<name>CR21_LITPE</name>
<proteinExistence type="evidence at protein level"/>
<protein>
    <recommendedName>
        <fullName evidence="3">Caerin 2.1</fullName>
    </recommendedName>
</protein>
<reference evidence="4" key="1">
    <citation type="journal article" date="2009" name="Rapid Commun. Mass Spectrom.">
        <title>The host-defence skin peptide profiles of Peron's Tree Frog Litoria peronii in winter and summer. Sequence determination by electrospray mass spectrometry and activities of the peptides.</title>
        <authorList>
            <person name="Bilusich D."/>
            <person name="Jackway R.J."/>
            <person name="Musgrave I.F."/>
            <person name="Tyler M.J."/>
            <person name="Bowie J.H."/>
        </authorList>
    </citation>
    <scope>PROTEIN SEQUENCE</scope>
    <scope>FUNCTION</scope>
    <scope>SUBCELLULAR LOCATION</scope>
    <scope>TISSUE SPECIFICITY</scope>
    <scope>MASS SPECTROMETRY</scope>
    <source>
        <tissue evidence="2">Skin secretion</tissue>
    </source>
</reference>
<organism>
    <name type="scientific">Litoria peronii</name>
    <name type="common">Emerald spotted tree frog</name>
    <name type="synonym">Hyla peronii</name>
    <dbReference type="NCBI Taxonomy" id="317363"/>
    <lineage>
        <taxon>Eukaryota</taxon>
        <taxon>Metazoa</taxon>
        <taxon>Chordata</taxon>
        <taxon>Craniata</taxon>
        <taxon>Vertebrata</taxon>
        <taxon>Euteleostomi</taxon>
        <taxon>Amphibia</taxon>
        <taxon>Batrachia</taxon>
        <taxon>Anura</taxon>
        <taxon>Neobatrachia</taxon>
        <taxon>Hyloidea</taxon>
        <taxon>Hylidae</taxon>
        <taxon>Pelodryadinae</taxon>
        <taxon>Litoria</taxon>
    </lineage>
</organism>
<sequence length="25" mass="2394">GLVSSIGRALGGLLADVVKSKGQPA</sequence>
<comment type="function">
    <text evidence="2">Antibacterial peptide with narrow spectrum of activity. Active against the Gram-negative bacterium P.multocida (MIC=25 ug/ml). Inhibits the formation of NO by neuronal nitric oxide synthase with an IC(50) of 9 ug/ml.</text>
</comment>
<comment type="subcellular location">
    <subcellularLocation>
        <location evidence="2">Secreted</location>
    </subcellularLocation>
</comment>
<comment type="tissue specificity">
    <text evidence="2">Expressed by the skin dorsal glands.</text>
</comment>
<comment type="mass spectrometry" mass="2391.0" method="Electrospray" evidence="2"/>
<comment type="similarity">
    <text evidence="1">Belongs to the frog skin active peptide (FSAP) family. Caerin subfamily.</text>
</comment>
<feature type="peptide" id="PRO_0000394178" description="Caerin 2.1" evidence="2">
    <location>
        <begin position="1"/>
        <end position="25"/>
    </location>
</feature>